<keyword id="KW-1185">Reference proteome</keyword>
<keyword id="KW-0687">Ribonucleoprotein</keyword>
<keyword id="KW-0689">Ribosomal protein</keyword>
<keyword id="KW-0694">RNA-binding</keyword>
<keyword id="KW-0699">rRNA-binding</keyword>
<proteinExistence type="inferred from homology"/>
<reference key="1">
    <citation type="submission" date="2007-07" db="EMBL/GenBank/DDBJ databases">
        <title>Complete genome sequence of Campylobacter hominis ATCC BAA-381, a commensal isolated from the human gastrointestinal tract.</title>
        <authorList>
            <person name="Fouts D.E."/>
            <person name="Mongodin E.F."/>
            <person name="Puiu D."/>
            <person name="Sebastian Y."/>
            <person name="Miller W.G."/>
            <person name="Mandrell R.E."/>
            <person name="Nelson K.E."/>
        </authorList>
    </citation>
    <scope>NUCLEOTIDE SEQUENCE [LARGE SCALE GENOMIC DNA]</scope>
    <source>
        <strain>ATCC BAA-381 / DSM 21671 / CCUG 45161 / LMG 19568 / NCTC 13146 / CH001A</strain>
    </source>
</reference>
<dbReference type="EMBL" id="CP000776">
    <property type="protein sequence ID" value="ABS51308.1"/>
    <property type="molecule type" value="Genomic_DNA"/>
</dbReference>
<dbReference type="RefSeq" id="WP_011991560.1">
    <property type="nucleotide sequence ID" value="NC_009714.1"/>
</dbReference>
<dbReference type="SMR" id="A7HZM2"/>
<dbReference type="STRING" id="360107.CHAB381_0100"/>
<dbReference type="KEGG" id="cha:CHAB381_0100"/>
<dbReference type="eggNOG" id="COG0256">
    <property type="taxonomic scope" value="Bacteria"/>
</dbReference>
<dbReference type="HOGENOM" id="CLU_098841_0_1_7"/>
<dbReference type="OrthoDB" id="9810939at2"/>
<dbReference type="Proteomes" id="UP000002407">
    <property type="component" value="Chromosome"/>
</dbReference>
<dbReference type="GO" id="GO:0022625">
    <property type="term" value="C:cytosolic large ribosomal subunit"/>
    <property type="evidence" value="ECO:0007669"/>
    <property type="project" value="TreeGrafter"/>
</dbReference>
<dbReference type="GO" id="GO:0008097">
    <property type="term" value="F:5S rRNA binding"/>
    <property type="evidence" value="ECO:0007669"/>
    <property type="project" value="TreeGrafter"/>
</dbReference>
<dbReference type="GO" id="GO:0003735">
    <property type="term" value="F:structural constituent of ribosome"/>
    <property type="evidence" value="ECO:0007669"/>
    <property type="project" value="InterPro"/>
</dbReference>
<dbReference type="GO" id="GO:0006412">
    <property type="term" value="P:translation"/>
    <property type="evidence" value="ECO:0007669"/>
    <property type="project" value="UniProtKB-UniRule"/>
</dbReference>
<dbReference type="CDD" id="cd00432">
    <property type="entry name" value="Ribosomal_L18_L5e"/>
    <property type="match status" value="1"/>
</dbReference>
<dbReference type="Gene3D" id="3.30.420.100">
    <property type="match status" value="1"/>
</dbReference>
<dbReference type="HAMAP" id="MF_01337_B">
    <property type="entry name" value="Ribosomal_uL18_B"/>
    <property type="match status" value="1"/>
</dbReference>
<dbReference type="InterPro" id="IPR004389">
    <property type="entry name" value="Ribosomal_uL18_bac-type"/>
</dbReference>
<dbReference type="InterPro" id="IPR005484">
    <property type="entry name" value="Ribosomal_uL18_bac/euk"/>
</dbReference>
<dbReference type="NCBIfam" id="TIGR00060">
    <property type="entry name" value="L18_bact"/>
    <property type="match status" value="1"/>
</dbReference>
<dbReference type="PANTHER" id="PTHR12899">
    <property type="entry name" value="39S RIBOSOMAL PROTEIN L18, MITOCHONDRIAL"/>
    <property type="match status" value="1"/>
</dbReference>
<dbReference type="PANTHER" id="PTHR12899:SF3">
    <property type="entry name" value="LARGE RIBOSOMAL SUBUNIT PROTEIN UL18M"/>
    <property type="match status" value="1"/>
</dbReference>
<dbReference type="Pfam" id="PF00861">
    <property type="entry name" value="Ribosomal_L18p"/>
    <property type="match status" value="1"/>
</dbReference>
<dbReference type="SUPFAM" id="SSF53137">
    <property type="entry name" value="Translational machinery components"/>
    <property type="match status" value="1"/>
</dbReference>
<organism>
    <name type="scientific">Campylobacter hominis (strain ATCC BAA-381 / DSM 21671 / CCUG 45161 / LMG 19568 / NCTC 13146 / CH001A)</name>
    <dbReference type="NCBI Taxonomy" id="360107"/>
    <lineage>
        <taxon>Bacteria</taxon>
        <taxon>Pseudomonadati</taxon>
        <taxon>Campylobacterota</taxon>
        <taxon>Epsilonproteobacteria</taxon>
        <taxon>Campylobacterales</taxon>
        <taxon>Campylobacteraceae</taxon>
        <taxon>Campylobacter</taxon>
    </lineage>
</organism>
<name>RL18_CAMHC</name>
<comment type="function">
    <text evidence="1">This is one of the proteins that bind and probably mediate the attachment of the 5S RNA into the large ribosomal subunit, where it forms part of the central protuberance.</text>
</comment>
<comment type="subunit">
    <text evidence="1">Part of the 50S ribosomal subunit; part of the 5S rRNA/L5/L18/L25 subcomplex. Contacts the 5S and 23S rRNAs.</text>
</comment>
<comment type="similarity">
    <text evidence="1">Belongs to the universal ribosomal protein uL18 family.</text>
</comment>
<feature type="chain" id="PRO_1000053007" description="Large ribosomal subunit protein uL18">
    <location>
        <begin position="1"/>
        <end position="118"/>
    </location>
</feature>
<gene>
    <name evidence="1" type="primary">rplR</name>
    <name type="ordered locus">CHAB381_0100</name>
</gene>
<evidence type="ECO:0000255" key="1">
    <source>
        <dbReference type="HAMAP-Rule" id="MF_01337"/>
    </source>
</evidence>
<evidence type="ECO:0000305" key="2"/>
<accession>A7HZM2</accession>
<protein>
    <recommendedName>
        <fullName evidence="1">Large ribosomal subunit protein uL18</fullName>
    </recommendedName>
    <alternativeName>
        <fullName evidence="2">50S ribosomal protein L18</fullName>
    </alternativeName>
</protein>
<sequence length="118" mass="12870">MTANTLKRKISLRIKRKRKIRANISGSAVCPRISIFKSNRTIYAQAIDDTNSKTLCASSGTALKIKANKDGAAILAKDFAEKLKAAKISEAIFDRNGYLYHGVVAAFADALRKNGIKL</sequence>